<accession>B1IVE8</accession>
<gene>
    <name evidence="1" type="primary">hslU</name>
    <name type="ordered locus">EcolC_4087</name>
</gene>
<reference key="1">
    <citation type="submission" date="2008-02" db="EMBL/GenBank/DDBJ databases">
        <title>Complete sequence of Escherichia coli C str. ATCC 8739.</title>
        <authorList>
            <person name="Copeland A."/>
            <person name="Lucas S."/>
            <person name="Lapidus A."/>
            <person name="Glavina del Rio T."/>
            <person name="Dalin E."/>
            <person name="Tice H."/>
            <person name="Bruce D."/>
            <person name="Goodwin L."/>
            <person name="Pitluck S."/>
            <person name="Kiss H."/>
            <person name="Brettin T."/>
            <person name="Detter J.C."/>
            <person name="Han C."/>
            <person name="Kuske C.R."/>
            <person name="Schmutz J."/>
            <person name="Larimer F."/>
            <person name="Land M."/>
            <person name="Hauser L."/>
            <person name="Kyrpides N."/>
            <person name="Mikhailova N."/>
            <person name="Ingram L."/>
            <person name="Richardson P."/>
        </authorList>
    </citation>
    <scope>NUCLEOTIDE SEQUENCE [LARGE SCALE GENOMIC DNA]</scope>
    <source>
        <strain>ATCC 8739 / DSM 1576 / NBRC 3972 / NCIMB 8545 / WDCM 00012 / Crooks</strain>
    </source>
</reference>
<dbReference type="EMBL" id="CP000946">
    <property type="protein sequence ID" value="ACA79685.1"/>
    <property type="molecule type" value="Genomic_DNA"/>
</dbReference>
<dbReference type="RefSeq" id="WP_001293341.1">
    <property type="nucleotide sequence ID" value="NZ_MTFT01000008.1"/>
</dbReference>
<dbReference type="SMR" id="B1IVE8"/>
<dbReference type="GeneID" id="93777967"/>
<dbReference type="KEGG" id="ecl:EcolC_4087"/>
<dbReference type="HOGENOM" id="CLU_033123_0_0_6"/>
<dbReference type="GO" id="GO:0009376">
    <property type="term" value="C:HslUV protease complex"/>
    <property type="evidence" value="ECO:0007669"/>
    <property type="project" value="UniProtKB-UniRule"/>
</dbReference>
<dbReference type="GO" id="GO:0005524">
    <property type="term" value="F:ATP binding"/>
    <property type="evidence" value="ECO:0007669"/>
    <property type="project" value="UniProtKB-UniRule"/>
</dbReference>
<dbReference type="GO" id="GO:0016887">
    <property type="term" value="F:ATP hydrolysis activity"/>
    <property type="evidence" value="ECO:0007669"/>
    <property type="project" value="InterPro"/>
</dbReference>
<dbReference type="GO" id="GO:0008233">
    <property type="term" value="F:peptidase activity"/>
    <property type="evidence" value="ECO:0007669"/>
    <property type="project" value="InterPro"/>
</dbReference>
<dbReference type="GO" id="GO:0036402">
    <property type="term" value="F:proteasome-activating activity"/>
    <property type="evidence" value="ECO:0007669"/>
    <property type="project" value="UniProtKB-UniRule"/>
</dbReference>
<dbReference type="GO" id="GO:0043335">
    <property type="term" value="P:protein unfolding"/>
    <property type="evidence" value="ECO:0007669"/>
    <property type="project" value="UniProtKB-UniRule"/>
</dbReference>
<dbReference type="GO" id="GO:0051603">
    <property type="term" value="P:proteolysis involved in protein catabolic process"/>
    <property type="evidence" value="ECO:0007669"/>
    <property type="project" value="TreeGrafter"/>
</dbReference>
<dbReference type="CDD" id="cd19498">
    <property type="entry name" value="RecA-like_HslU"/>
    <property type="match status" value="1"/>
</dbReference>
<dbReference type="FunFam" id="1.10.8.10:FF:000012">
    <property type="entry name" value="ATP-dependent protease ATPase subunit HslU"/>
    <property type="match status" value="1"/>
</dbReference>
<dbReference type="FunFam" id="1.10.8.10:FF:000028">
    <property type="entry name" value="ATP-dependent protease ATPase subunit HslU"/>
    <property type="match status" value="1"/>
</dbReference>
<dbReference type="FunFam" id="1.10.8.60:FF:000027">
    <property type="entry name" value="ATP-dependent protease ATPase subunit HslU"/>
    <property type="match status" value="1"/>
</dbReference>
<dbReference type="FunFam" id="3.40.50.300:FF:000213">
    <property type="entry name" value="ATP-dependent protease ATPase subunit HslU"/>
    <property type="match status" value="1"/>
</dbReference>
<dbReference type="FunFam" id="3.40.50.300:FF:000220">
    <property type="entry name" value="ATP-dependent protease ATPase subunit HslU"/>
    <property type="match status" value="1"/>
</dbReference>
<dbReference type="Gene3D" id="1.10.8.60">
    <property type="match status" value="1"/>
</dbReference>
<dbReference type="Gene3D" id="1.10.8.10">
    <property type="entry name" value="DNA helicase RuvA subunit, C-terminal domain"/>
    <property type="match status" value="2"/>
</dbReference>
<dbReference type="Gene3D" id="3.40.50.300">
    <property type="entry name" value="P-loop containing nucleotide triphosphate hydrolases"/>
    <property type="match status" value="1"/>
</dbReference>
<dbReference type="HAMAP" id="MF_00249">
    <property type="entry name" value="HslU"/>
    <property type="match status" value="1"/>
</dbReference>
<dbReference type="InterPro" id="IPR003593">
    <property type="entry name" value="AAA+_ATPase"/>
</dbReference>
<dbReference type="InterPro" id="IPR050052">
    <property type="entry name" value="ATP-dep_Clp_protease_ClpX"/>
</dbReference>
<dbReference type="InterPro" id="IPR003959">
    <property type="entry name" value="ATPase_AAA_core"/>
</dbReference>
<dbReference type="InterPro" id="IPR019489">
    <property type="entry name" value="Clp_ATPase_C"/>
</dbReference>
<dbReference type="InterPro" id="IPR004491">
    <property type="entry name" value="HslU"/>
</dbReference>
<dbReference type="InterPro" id="IPR027417">
    <property type="entry name" value="P-loop_NTPase"/>
</dbReference>
<dbReference type="NCBIfam" id="TIGR00390">
    <property type="entry name" value="hslU"/>
    <property type="match status" value="1"/>
</dbReference>
<dbReference type="NCBIfam" id="NF003544">
    <property type="entry name" value="PRK05201.1"/>
    <property type="match status" value="1"/>
</dbReference>
<dbReference type="PANTHER" id="PTHR48102">
    <property type="entry name" value="ATP-DEPENDENT CLP PROTEASE ATP-BINDING SUBUNIT CLPX-LIKE, MITOCHONDRIAL-RELATED"/>
    <property type="match status" value="1"/>
</dbReference>
<dbReference type="PANTHER" id="PTHR48102:SF3">
    <property type="entry name" value="ATP-DEPENDENT PROTEASE ATPASE SUBUNIT HSLU"/>
    <property type="match status" value="1"/>
</dbReference>
<dbReference type="Pfam" id="PF00004">
    <property type="entry name" value="AAA"/>
    <property type="match status" value="1"/>
</dbReference>
<dbReference type="Pfam" id="PF07724">
    <property type="entry name" value="AAA_2"/>
    <property type="match status" value="1"/>
</dbReference>
<dbReference type="SMART" id="SM00382">
    <property type="entry name" value="AAA"/>
    <property type="match status" value="1"/>
</dbReference>
<dbReference type="SMART" id="SM01086">
    <property type="entry name" value="ClpB_D2-small"/>
    <property type="match status" value="1"/>
</dbReference>
<dbReference type="SUPFAM" id="SSF52540">
    <property type="entry name" value="P-loop containing nucleoside triphosphate hydrolases"/>
    <property type="match status" value="1"/>
</dbReference>
<keyword id="KW-0067">ATP-binding</keyword>
<keyword id="KW-0143">Chaperone</keyword>
<keyword id="KW-0963">Cytoplasm</keyword>
<keyword id="KW-0547">Nucleotide-binding</keyword>
<keyword id="KW-0346">Stress response</keyword>
<comment type="function">
    <text evidence="1">ATPase subunit of a proteasome-like degradation complex; this subunit has chaperone activity. The binding of ATP and its subsequent hydrolysis by HslU are essential for unfolding of protein substrates subsequently hydrolyzed by HslV. HslU recognizes the N-terminal part of its protein substrates and unfolds these before they are guided to HslV for hydrolysis.</text>
</comment>
<comment type="subunit">
    <text evidence="1">A double ring-shaped homohexamer of HslV is capped on each side by a ring-shaped HslU homohexamer. The assembly of the HslU/HslV complex is dependent on binding of ATP.</text>
</comment>
<comment type="subcellular location">
    <subcellularLocation>
        <location evidence="1">Cytoplasm</location>
    </subcellularLocation>
</comment>
<comment type="induction">
    <text evidence="1">By heat shock.</text>
</comment>
<comment type="similarity">
    <text evidence="1">Belongs to the ClpX chaperone family. HslU subfamily.</text>
</comment>
<sequence length="443" mass="49594">MSEMTPREIVSELDKHIIGQDNAKRSVAIALRNRWRRMQLNEELRHEVTPKNILMIGPTGVGKTEIARRLAKLANAPFIKVEATKFTEVGYVGKEVDSIIRDLTDAAVKMVRVQAIEKNRYRAEELAEERILDVLIPPAKNNWGQTEQQQEPSAARQAFRKKLREGQLDDKEIEIDLAAAPMGVEIMAPPGMEEMTSQLQSMFQNLGGQKQKARKLKIKDAMKLLIEEEAAKLVNPEELKQDAIDAVEQHGIVFIDEIDKICKRGESSGPDVSREGVQRDLLPLVEGCTVSTKHGMVKTDHILFIASGAFQIAKPSDLIPELQGRLPIRVELQALTTSDFERILTEPNASITVQYKALMATEGVNIEFTDSGIKRIAEAAWQVNESTENIGARRLHTVLERLMEEISYDASDLSGQNITIDADYVSKHLDALVADEDLSRFIL</sequence>
<protein>
    <recommendedName>
        <fullName evidence="1">ATP-dependent protease ATPase subunit HslU</fullName>
    </recommendedName>
    <alternativeName>
        <fullName evidence="1">Heat shock protein HslU</fullName>
    </alternativeName>
    <alternativeName>
        <fullName evidence="1">Unfoldase HslU</fullName>
    </alternativeName>
</protein>
<feature type="chain" id="PRO_1000078445" description="ATP-dependent protease ATPase subunit HslU">
    <location>
        <begin position="1"/>
        <end position="443"/>
    </location>
</feature>
<feature type="binding site" evidence="1">
    <location>
        <position position="18"/>
    </location>
    <ligand>
        <name>ATP</name>
        <dbReference type="ChEBI" id="CHEBI:30616"/>
    </ligand>
</feature>
<feature type="binding site" evidence="1">
    <location>
        <begin position="60"/>
        <end position="65"/>
    </location>
    <ligand>
        <name>ATP</name>
        <dbReference type="ChEBI" id="CHEBI:30616"/>
    </ligand>
</feature>
<feature type="binding site" evidence="1">
    <location>
        <position position="256"/>
    </location>
    <ligand>
        <name>ATP</name>
        <dbReference type="ChEBI" id="CHEBI:30616"/>
    </ligand>
</feature>
<feature type="binding site" evidence="1">
    <location>
        <position position="321"/>
    </location>
    <ligand>
        <name>ATP</name>
        <dbReference type="ChEBI" id="CHEBI:30616"/>
    </ligand>
</feature>
<feature type="binding site" evidence="1">
    <location>
        <position position="393"/>
    </location>
    <ligand>
        <name>ATP</name>
        <dbReference type="ChEBI" id="CHEBI:30616"/>
    </ligand>
</feature>
<name>HSLU_ECOLC</name>
<organism>
    <name type="scientific">Escherichia coli (strain ATCC 8739 / DSM 1576 / NBRC 3972 / NCIMB 8545 / WDCM 00012 / Crooks)</name>
    <dbReference type="NCBI Taxonomy" id="481805"/>
    <lineage>
        <taxon>Bacteria</taxon>
        <taxon>Pseudomonadati</taxon>
        <taxon>Pseudomonadota</taxon>
        <taxon>Gammaproteobacteria</taxon>
        <taxon>Enterobacterales</taxon>
        <taxon>Enterobacteriaceae</taxon>
        <taxon>Escherichia</taxon>
    </lineage>
</organism>
<proteinExistence type="inferred from homology"/>
<evidence type="ECO:0000255" key="1">
    <source>
        <dbReference type="HAMAP-Rule" id="MF_00249"/>
    </source>
</evidence>